<keyword id="KW-0963">Cytoplasm</keyword>
<keyword id="KW-0413">Isomerase</keyword>
<keyword id="KW-1185">Reference proteome</keyword>
<proteinExistence type="inferred from homology"/>
<sequence length="274" mass="29976">MYRVFDKLASRPFVSLPGIQLIAKMPLSDLNKLPPLADQLEQAKRIAAYRAVDENFDAKTHKVVGVGSGTTVVYVAERLGEYMDEKTNFVCIPTGFQSKQLILSNKLQLGVIEQFPEVDIAFDGADEVDAGLQLIKGGGACLFQEKLVSTSAKKFIVVADSRKKSPKYLGTNWKKGVPIEVVPSSYVRVLSDLKNKLNCKSAMVRQGGSAKAGPVVTDNCNFIIDADFGEITDPRKLHQDIKLLVGVVETGLFIDNAEKAYFGYPDGSVDLQEL</sequence>
<evidence type="ECO:0000305" key="1"/>
<name>RPIA_KLULA</name>
<reference key="1">
    <citation type="journal article" date="2004" name="Nature">
        <title>Genome evolution in yeasts.</title>
        <authorList>
            <person name="Dujon B."/>
            <person name="Sherman D."/>
            <person name="Fischer G."/>
            <person name="Durrens P."/>
            <person name="Casaregola S."/>
            <person name="Lafontaine I."/>
            <person name="de Montigny J."/>
            <person name="Marck C."/>
            <person name="Neuveglise C."/>
            <person name="Talla E."/>
            <person name="Goffard N."/>
            <person name="Frangeul L."/>
            <person name="Aigle M."/>
            <person name="Anthouard V."/>
            <person name="Babour A."/>
            <person name="Barbe V."/>
            <person name="Barnay S."/>
            <person name="Blanchin S."/>
            <person name="Beckerich J.-M."/>
            <person name="Beyne E."/>
            <person name="Bleykasten C."/>
            <person name="Boisrame A."/>
            <person name="Boyer J."/>
            <person name="Cattolico L."/>
            <person name="Confanioleri F."/>
            <person name="de Daruvar A."/>
            <person name="Despons L."/>
            <person name="Fabre E."/>
            <person name="Fairhead C."/>
            <person name="Ferry-Dumazet H."/>
            <person name="Groppi A."/>
            <person name="Hantraye F."/>
            <person name="Hennequin C."/>
            <person name="Jauniaux N."/>
            <person name="Joyet P."/>
            <person name="Kachouri R."/>
            <person name="Kerrest A."/>
            <person name="Koszul R."/>
            <person name="Lemaire M."/>
            <person name="Lesur I."/>
            <person name="Ma L."/>
            <person name="Muller H."/>
            <person name="Nicaud J.-M."/>
            <person name="Nikolski M."/>
            <person name="Oztas S."/>
            <person name="Ozier-Kalogeropoulos O."/>
            <person name="Pellenz S."/>
            <person name="Potier S."/>
            <person name="Richard G.-F."/>
            <person name="Straub M.-L."/>
            <person name="Suleau A."/>
            <person name="Swennen D."/>
            <person name="Tekaia F."/>
            <person name="Wesolowski-Louvel M."/>
            <person name="Westhof E."/>
            <person name="Wirth B."/>
            <person name="Zeniou-Meyer M."/>
            <person name="Zivanovic Y."/>
            <person name="Bolotin-Fukuhara M."/>
            <person name="Thierry A."/>
            <person name="Bouchier C."/>
            <person name="Caudron B."/>
            <person name="Scarpelli C."/>
            <person name="Gaillardin C."/>
            <person name="Weissenbach J."/>
            <person name="Wincker P."/>
            <person name="Souciet J.-L."/>
        </authorList>
    </citation>
    <scope>NUCLEOTIDE SEQUENCE [LARGE SCALE GENOMIC DNA]</scope>
    <source>
        <strain>ATCC 8585 / CBS 2359 / DSM 70799 / NBRC 1267 / NRRL Y-1140 / WM37</strain>
    </source>
</reference>
<dbReference type="EC" id="5.3.1.6"/>
<dbReference type="EMBL" id="CR382123">
    <property type="protein sequence ID" value="CAH01655.1"/>
    <property type="molecule type" value="Genomic_DNA"/>
</dbReference>
<dbReference type="RefSeq" id="XP_452804.1">
    <property type="nucleotide sequence ID" value="XM_452804.1"/>
</dbReference>
<dbReference type="SMR" id="Q6CTD5"/>
<dbReference type="FunCoup" id="Q6CTD5">
    <property type="interactions" value="955"/>
</dbReference>
<dbReference type="STRING" id="284590.Q6CTD5"/>
<dbReference type="PaxDb" id="284590-Q6CTD5"/>
<dbReference type="KEGG" id="kla:KLLA0_C13541g"/>
<dbReference type="eggNOG" id="KOG3075">
    <property type="taxonomic scope" value="Eukaryota"/>
</dbReference>
<dbReference type="HOGENOM" id="CLU_056590_0_0_1"/>
<dbReference type="InParanoid" id="Q6CTD5"/>
<dbReference type="OMA" id="ACHVQEK"/>
<dbReference type="UniPathway" id="UPA00115">
    <property type="reaction ID" value="UER00412"/>
</dbReference>
<dbReference type="Proteomes" id="UP000000598">
    <property type="component" value="Chromosome C"/>
</dbReference>
<dbReference type="GO" id="GO:0005737">
    <property type="term" value="C:cytoplasm"/>
    <property type="evidence" value="ECO:0007669"/>
    <property type="project" value="UniProtKB-SubCell"/>
</dbReference>
<dbReference type="GO" id="GO:0004751">
    <property type="term" value="F:ribose-5-phosphate isomerase activity"/>
    <property type="evidence" value="ECO:0007669"/>
    <property type="project" value="UniProtKB-EC"/>
</dbReference>
<dbReference type="GO" id="GO:0006014">
    <property type="term" value="P:D-ribose metabolic process"/>
    <property type="evidence" value="ECO:0007669"/>
    <property type="project" value="TreeGrafter"/>
</dbReference>
<dbReference type="GO" id="GO:0009052">
    <property type="term" value="P:pentose-phosphate shunt, non-oxidative branch"/>
    <property type="evidence" value="ECO:0007669"/>
    <property type="project" value="InterPro"/>
</dbReference>
<dbReference type="CDD" id="cd01398">
    <property type="entry name" value="RPI_A"/>
    <property type="match status" value="1"/>
</dbReference>
<dbReference type="FunFam" id="3.40.50.1360:FF:000014">
    <property type="entry name" value="Ribose 5-phosphate isomerase"/>
    <property type="match status" value="1"/>
</dbReference>
<dbReference type="FunFam" id="3.30.70.260:FF:000053">
    <property type="entry name" value="Ribose-5-phosphate isomerase, putative"/>
    <property type="match status" value="1"/>
</dbReference>
<dbReference type="Gene3D" id="3.30.70.260">
    <property type="match status" value="1"/>
</dbReference>
<dbReference type="Gene3D" id="3.40.50.1360">
    <property type="match status" value="1"/>
</dbReference>
<dbReference type="InterPro" id="IPR037171">
    <property type="entry name" value="NagB/RpiA_transferase-like"/>
</dbReference>
<dbReference type="InterPro" id="IPR004788">
    <property type="entry name" value="Ribose5P_isomerase_type_A"/>
</dbReference>
<dbReference type="NCBIfam" id="NF001924">
    <property type="entry name" value="PRK00702.1"/>
    <property type="match status" value="1"/>
</dbReference>
<dbReference type="NCBIfam" id="TIGR00021">
    <property type="entry name" value="rpiA"/>
    <property type="match status" value="1"/>
</dbReference>
<dbReference type="PANTHER" id="PTHR11934">
    <property type="entry name" value="RIBOSE-5-PHOSPHATE ISOMERASE"/>
    <property type="match status" value="1"/>
</dbReference>
<dbReference type="PANTHER" id="PTHR11934:SF0">
    <property type="entry name" value="RIBOSE-5-PHOSPHATE ISOMERASE"/>
    <property type="match status" value="1"/>
</dbReference>
<dbReference type="Pfam" id="PF06026">
    <property type="entry name" value="Rib_5-P_isom_A"/>
    <property type="match status" value="1"/>
</dbReference>
<dbReference type="SUPFAM" id="SSF75445">
    <property type="entry name" value="D-ribose-5-phosphate isomerase (RpiA), lid domain"/>
    <property type="match status" value="1"/>
</dbReference>
<dbReference type="SUPFAM" id="SSF100950">
    <property type="entry name" value="NagB/RpiA/CoA transferase-like"/>
    <property type="match status" value="1"/>
</dbReference>
<gene>
    <name type="primary">RKI1</name>
    <name type="ordered locus">KLLA0C13541g</name>
</gene>
<protein>
    <recommendedName>
        <fullName>Ribose-5-phosphate isomerase</fullName>
        <ecNumber>5.3.1.6</ecNumber>
    </recommendedName>
    <alternativeName>
        <fullName>D-ribose-5-phosphate ketol-isomerase</fullName>
    </alternativeName>
    <alternativeName>
        <fullName>Phosphoriboisomerase</fullName>
    </alternativeName>
</protein>
<accession>Q6CTD5</accession>
<comment type="catalytic activity">
    <reaction>
        <text>aldehydo-D-ribose 5-phosphate = D-ribulose 5-phosphate</text>
        <dbReference type="Rhea" id="RHEA:14657"/>
        <dbReference type="ChEBI" id="CHEBI:58121"/>
        <dbReference type="ChEBI" id="CHEBI:58273"/>
        <dbReference type="EC" id="5.3.1.6"/>
    </reaction>
</comment>
<comment type="pathway">
    <text>Carbohydrate degradation; pentose phosphate pathway; D-ribose 5-phosphate from D-ribulose 5-phosphate (non-oxidative stage): step 1/1.</text>
</comment>
<comment type="subcellular location">
    <subcellularLocation>
        <location evidence="1">Cytoplasm</location>
    </subcellularLocation>
</comment>
<comment type="similarity">
    <text evidence="1">Belongs to the ribose 5-phosphate isomerase family.</text>
</comment>
<feature type="chain" id="PRO_0000339888" description="Ribose-5-phosphate isomerase">
    <location>
        <begin position="1"/>
        <end position="274"/>
    </location>
</feature>
<organism>
    <name type="scientific">Kluyveromyces lactis (strain ATCC 8585 / CBS 2359 / DSM 70799 / NBRC 1267 / NRRL Y-1140 / WM37)</name>
    <name type="common">Yeast</name>
    <name type="synonym">Candida sphaerica</name>
    <dbReference type="NCBI Taxonomy" id="284590"/>
    <lineage>
        <taxon>Eukaryota</taxon>
        <taxon>Fungi</taxon>
        <taxon>Dikarya</taxon>
        <taxon>Ascomycota</taxon>
        <taxon>Saccharomycotina</taxon>
        <taxon>Saccharomycetes</taxon>
        <taxon>Saccharomycetales</taxon>
        <taxon>Saccharomycetaceae</taxon>
        <taxon>Kluyveromyces</taxon>
    </lineage>
</organism>